<evidence type="ECO:0000255" key="1">
    <source>
        <dbReference type="HAMAP-Rule" id="MF_00163"/>
    </source>
</evidence>
<dbReference type="EMBL" id="AE014292">
    <property type="protein sequence ID" value="AAN33648.1"/>
    <property type="molecule type" value="Genomic_DNA"/>
</dbReference>
<dbReference type="EMBL" id="CP002998">
    <property type="protein sequence ID" value="AEM19927.1"/>
    <property type="molecule type" value="Genomic_DNA"/>
</dbReference>
<dbReference type="RefSeq" id="WP_002966173.1">
    <property type="nucleotide sequence ID" value="NZ_KN046805.1"/>
</dbReference>
<dbReference type="SMR" id="P63920"/>
<dbReference type="KEGG" id="bms:BRA0454"/>
<dbReference type="KEGG" id="bsi:BS1330_II0451"/>
<dbReference type="PATRIC" id="fig|204722.22.peg.3241"/>
<dbReference type="HOGENOM" id="CLU_061901_2_0_5"/>
<dbReference type="Proteomes" id="UP000007104">
    <property type="component" value="Chromosome II"/>
</dbReference>
<dbReference type="GO" id="GO:0042586">
    <property type="term" value="F:peptide deformylase activity"/>
    <property type="evidence" value="ECO:0007669"/>
    <property type="project" value="UniProtKB-UniRule"/>
</dbReference>
<dbReference type="GO" id="GO:0043686">
    <property type="term" value="P:co-translational protein modification"/>
    <property type="evidence" value="ECO:0007669"/>
    <property type="project" value="TreeGrafter"/>
</dbReference>
<dbReference type="GO" id="GO:0006412">
    <property type="term" value="P:translation"/>
    <property type="evidence" value="ECO:0007669"/>
    <property type="project" value="UniProtKB-UniRule"/>
</dbReference>
<dbReference type="CDD" id="cd00487">
    <property type="entry name" value="Pep_deformylase"/>
    <property type="match status" value="1"/>
</dbReference>
<dbReference type="Gene3D" id="3.90.45.10">
    <property type="entry name" value="Peptide deformylase"/>
    <property type="match status" value="1"/>
</dbReference>
<dbReference type="HAMAP" id="MF_00163">
    <property type="entry name" value="Pep_deformylase"/>
    <property type="match status" value="1"/>
</dbReference>
<dbReference type="InterPro" id="IPR023635">
    <property type="entry name" value="Peptide_deformylase"/>
</dbReference>
<dbReference type="InterPro" id="IPR036821">
    <property type="entry name" value="Peptide_deformylase_sf"/>
</dbReference>
<dbReference type="NCBIfam" id="TIGR00079">
    <property type="entry name" value="pept_deformyl"/>
    <property type="match status" value="1"/>
</dbReference>
<dbReference type="NCBIfam" id="NF001159">
    <property type="entry name" value="PRK00150.1-3"/>
    <property type="match status" value="1"/>
</dbReference>
<dbReference type="NCBIfam" id="NF009484">
    <property type="entry name" value="PRK12846.1-5"/>
    <property type="match status" value="1"/>
</dbReference>
<dbReference type="PANTHER" id="PTHR10458">
    <property type="entry name" value="PEPTIDE DEFORMYLASE"/>
    <property type="match status" value="1"/>
</dbReference>
<dbReference type="PANTHER" id="PTHR10458:SF22">
    <property type="entry name" value="PEPTIDE DEFORMYLASE"/>
    <property type="match status" value="1"/>
</dbReference>
<dbReference type="Pfam" id="PF01327">
    <property type="entry name" value="Pep_deformylase"/>
    <property type="match status" value="1"/>
</dbReference>
<dbReference type="PIRSF" id="PIRSF004749">
    <property type="entry name" value="Pep_def"/>
    <property type="match status" value="1"/>
</dbReference>
<dbReference type="PRINTS" id="PR01576">
    <property type="entry name" value="PDEFORMYLASE"/>
</dbReference>
<dbReference type="SUPFAM" id="SSF56420">
    <property type="entry name" value="Peptide deformylase"/>
    <property type="match status" value="1"/>
</dbReference>
<feature type="chain" id="PRO_0000082893" description="Peptide deformylase-like">
    <location>
        <begin position="1"/>
        <end position="164"/>
    </location>
</feature>
<feature type="active site" evidence="1">
    <location>
        <position position="134"/>
    </location>
</feature>
<name>DEFL_BRUSU</name>
<comment type="similarity">
    <text evidence="1">Belongs to the polypeptide deformylase family.</text>
</comment>
<protein>
    <recommendedName>
        <fullName evidence="1">Peptide deformylase-like</fullName>
    </recommendedName>
    <alternativeName>
        <fullName evidence="1">Polypeptide deformylase-like</fullName>
    </alternativeName>
</protein>
<organism>
    <name type="scientific">Brucella suis biovar 1 (strain 1330)</name>
    <dbReference type="NCBI Taxonomy" id="204722"/>
    <lineage>
        <taxon>Bacteria</taxon>
        <taxon>Pseudomonadati</taxon>
        <taxon>Pseudomonadota</taxon>
        <taxon>Alphaproteobacteria</taxon>
        <taxon>Hyphomicrobiales</taxon>
        <taxon>Brucellaceae</taxon>
        <taxon>Brucella/Ochrobactrum group</taxon>
        <taxon>Brucella</taxon>
    </lineage>
</organism>
<gene>
    <name type="primary">def</name>
    <name type="ordered locus">BRA0454</name>
    <name type="ordered locus">BS1330_II0451</name>
</gene>
<reference key="1">
    <citation type="journal article" date="2002" name="Proc. Natl. Acad. Sci. U.S.A.">
        <title>The Brucella suis genome reveals fundamental similarities between animal and plant pathogens and symbionts.</title>
        <authorList>
            <person name="Paulsen I.T."/>
            <person name="Seshadri R."/>
            <person name="Nelson K.E."/>
            <person name="Eisen J.A."/>
            <person name="Heidelberg J.F."/>
            <person name="Read T.D."/>
            <person name="Dodson R.J."/>
            <person name="Umayam L.A."/>
            <person name="Brinkac L.M."/>
            <person name="Beanan M.J."/>
            <person name="Daugherty S.C."/>
            <person name="DeBoy R.T."/>
            <person name="Durkin A.S."/>
            <person name="Kolonay J.F."/>
            <person name="Madupu R."/>
            <person name="Nelson W.C."/>
            <person name="Ayodeji B."/>
            <person name="Kraul M."/>
            <person name="Shetty J."/>
            <person name="Malek J.A."/>
            <person name="Van Aken S.E."/>
            <person name="Riedmuller S."/>
            <person name="Tettelin H."/>
            <person name="Gill S.R."/>
            <person name="White O."/>
            <person name="Salzberg S.L."/>
            <person name="Hoover D.L."/>
            <person name="Lindler L.E."/>
            <person name="Halling S.M."/>
            <person name="Boyle S.M."/>
            <person name="Fraser C.M."/>
        </authorList>
    </citation>
    <scope>NUCLEOTIDE SEQUENCE [LARGE SCALE GENOMIC DNA]</scope>
    <source>
        <strain>1330</strain>
    </source>
</reference>
<reference key="2">
    <citation type="journal article" date="2011" name="J. Bacteriol.">
        <title>Revised genome sequence of Brucella suis 1330.</title>
        <authorList>
            <person name="Tae H."/>
            <person name="Shallom S."/>
            <person name="Settlage R."/>
            <person name="Preston D."/>
            <person name="Adams L.G."/>
            <person name="Garner H.R."/>
        </authorList>
    </citation>
    <scope>NUCLEOTIDE SEQUENCE [LARGE SCALE GENOMIC DNA]</scope>
    <source>
        <strain>1330</strain>
    </source>
</reference>
<proteinExistence type="inferred from homology"/>
<accession>P63920</accession>
<accession>G0KCI9</accession>
<accession>Q8YBS4</accession>
<sequence>MTVRLIVKYPDPRLRAAAEPVTTFDEGLRKLADDLLDTMRAAPGIGITAPHIGISKRVVVLELDRAAGPKIYINPEIVWACEEKIRHQEGSVSMPGVVDEVERHARIRLRYQDLDGNEQTEESDGLLAVCHQHEIDQLDGIFWVQRLSRLRRERLIKRYEKLQR</sequence>